<feature type="chain" id="PRO_1000138484" description="Anti-adapter protein IraP">
    <location>
        <begin position="1"/>
        <end position="86"/>
    </location>
</feature>
<feature type="coiled-coil region" evidence="1">
    <location>
        <begin position="1"/>
        <end position="36"/>
    </location>
</feature>
<proteinExistence type="inferred from homology"/>
<dbReference type="EMBL" id="CU928164">
    <property type="protein sequence ID" value="CAR16439.1"/>
    <property type="molecule type" value="Genomic_DNA"/>
</dbReference>
<dbReference type="RefSeq" id="WP_000792975.1">
    <property type="nucleotide sequence ID" value="NC_011750.1"/>
</dbReference>
<dbReference type="RefSeq" id="YP_002406342.1">
    <property type="nucleotide sequence ID" value="NC_011750.1"/>
</dbReference>
<dbReference type="SMR" id="B7NJC0"/>
<dbReference type="STRING" id="585057.ECIAI39_0299"/>
<dbReference type="KEGG" id="ect:ECIAI39_0299"/>
<dbReference type="PATRIC" id="fig|585057.6.peg.325"/>
<dbReference type="HOGENOM" id="CLU_169517_0_0_6"/>
<dbReference type="Proteomes" id="UP000000749">
    <property type="component" value="Chromosome"/>
</dbReference>
<dbReference type="GO" id="GO:0005737">
    <property type="term" value="C:cytoplasm"/>
    <property type="evidence" value="ECO:0007669"/>
    <property type="project" value="UniProtKB-SubCell"/>
</dbReference>
<dbReference type="GO" id="GO:0009267">
    <property type="term" value="P:cellular response to starvation"/>
    <property type="evidence" value="ECO:0007669"/>
    <property type="project" value="UniProtKB-UniRule"/>
</dbReference>
<dbReference type="HAMAP" id="MF_01198">
    <property type="entry name" value="Anti_adapt_IraP"/>
    <property type="match status" value="1"/>
</dbReference>
<dbReference type="InterPro" id="IPR019732">
    <property type="entry name" value="SigmaS_Anti-adapt_IraP"/>
</dbReference>
<dbReference type="NCBIfam" id="NF007598">
    <property type="entry name" value="PRK10244.1"/>
    <property type="match status" value="1"/>
</dbReference>
<dbReference type="Pfam" id="PF10796">
    <property type="entry name" value="Anti-adapt_IraP"/>
    <property type="match status" value="1"/>
</dbReference>
<comment type="function">
    <text evidence="1">Inhibits RpoS proteolysis by regulating RssB activity, thereby increasing the stability of the sigma stress factor RpoS especially during phosphate starvation, but also in stationary phase and during nitrogen starvation. Its effect on RpoS stability is due to its interaction with RssB, which probably blocks the interaction of RssB with RpoS, and the consequent delivery of the RssB-RpoS complex to the ClpXP protein degradation pathway.</text>
</comment>
<comment type="subunit">
    <text evidence="1">Interacts with RssB.</text>
</comment>
<comment type="subcellular location">
    <subcellularLocation>
        <location evidence="1">Cytoplasm</location>
    </subcellularLocation>
</comment>
<comment type="similarity">
    <text evidence="1">Belongs to the IraP family.</text>
</comment>
<accession>B7NJC0</accession>
<protein>
    <recommendedName>
        <fullName evidence="1">Anti-adapter protein IraP</fullName>
    </recommendedName>
</protein>
<reference key="1">
    <citation type="journal article" date="2009" name="PLoS Genet.">
        <title>Organised genome dynamics in the Escherichia coli species results in highly diverse adaptive paths.</title>
        <authorList>
            <person name="Touchon M."/>
            <person name="Hoede C."/>
            <person name="Tenaillon O."/>
            <person name="Barbe V."/>
            <person name="Baeriswyl S."/>
            <person name="Bidet P."/>
            <person name="Bingen E."/>
            <person name="Bonacorsi S."/>
            <person name="Bouchier C."/>
            <person name="Bouvet O."/>
            <person name="Calteau A."/>
            <person name="Chiapello H."/>
            <person name="Clermont O."/>
            <person name="Cruveiller S."/>
            <person name="Danchin A."/>
            <person name="Diard M."/>
            <person name="Dossat C."/>
            <person name="Karoui M.E."/>
            <person name="Frapy E."/>
            <person name="Garry L."/>
            <person name="Ghigo J.M."/>
            <person name="Gilles A.M."/>
            <person name="Johnson J."/>
            <person name="Le Bouguenec C."/>
            <person name="Lescat M."/>
            <person name="Mangenot S."/>
            <person name="Martinez-Jehanne V."/>
            <person name="Matic I."/>
            <person name="Nassif X."/>
            <person name="Oztas S."/>
            <person name="Petit M.A."/>
            <person name="Pichon C."/>
            <person name="Rouy Z."/>
            <person name="Ruf C.S."/>
            <person name="Schneider D."/>
            <person name="Tourret J."/>
            <person name="Vacherie B."/>
            <person name="Vallenet D."/>
            <person name="Medigue C."/>
            <person name="Rocha E.P.C."/>
            <person name="Denamur E."/>
        </authorList>
    </citation>
    <scope>NUCLEOTIDE SEQUENCE [LARGE SCALE GENOMIC DNA]</scope>
    <source>
        <strain>IAI39 / ExPEC</strain>
    </source>
</reference>
<keyword id="KW-0175">Coiled coil</keyword>
<keyword id="KW-0963">Cytoplasm</keyword>
<keyword id="KW-0346">Stress response</keyword>
<sequence length="86" mass="9936">MKNLIAELLFKLAQKEEESKELCAQVEALEIIVTAMLRNMAQNDQQRLIDQVEGALYEVKPDASIPDDDTELLRNYVKKLLKHPRQ</sequence>
<evidence type="ECO:0000255" key="1">
    <source>
        <dbReference type="HAMAP-Rule" id="MF_01198"/>
    </source>
</evidence>
<gene>
    <name evidence="1" type="primary">iraP</name>
    <name type="ordered locus">ECIAI39_0299</name>
</gene>
<organism>
    <name type="scientific">Escherichia coli O7:K1 (strain IAI39 / ExPEC)</name>
    <dbReference type="NCBI Taxonomy" id="585057"/>
    <lineage>
        <taxon>Bacteria</taxon>
        <taxon>Pseudomonadati</taxon>
        <taxon>Pseudomonadota</taxon>
        <taxon>Gammaproteobacteria</taxon>
        <taxon>Enterobacterales</taxon>
        <taxon>Enterobacteriaceae</taxon>
        <taxon>Escherichia</taxon>
    </lineage>
</organism>
<name>IRAP_ECO7I</name>